<organism>
    <name type="scientific">Escherichia coli (strain K12)</name>
    <dbReference type="NCBI Taxonomy" id="83333"/>
    <lineage>
        <taxon>Bacteria</taxon>
        <taxon>Pseudomonadati</taxon>
        <taxon>Pseudomonadota</taxon>
        <taxon>Gammaproteobacteria</taxon>
        <taxon>Enterobacterales</taxon>
        <taxon>Enterobacteriaceae</taxon>
        <taxon>Escherichia</taxon>
    </lineage>
</organism>
<gene>
    <name type="primary">arnE</name>
    <name type="synonym">pmrL</name>
    <name type="synonym">yfbW</name>
    <name type="ordered locus">b4544</name>
    <name type="ordered locus">JW2252</name>
</gene>
<evidence type="ECO:0000255" key="1"/>
<evidence type="ECO:0000269" key="2">
    <source>
    </source>
</evidence>
<evidence type="ECO:0000305" key="3"/>
<evidence type="ECO:0000305" key="4">
    <source>
    </source>
</evidence>
<comment type="function">
    <text evidence="2">Translocates 4-amino-4-deoxy-L-arabinose-phosphoundecaprenol (alpha-L-Ara4N-phosphoundecaprenol) from the cytoplasmic to the periplasmic side of the inner membrane.</text>
</comment>
<comment type="pathway">
    <text>Bacterial outer membrane biogenesis; lipopolysaccharide biosynthesis.</text>
</comment>
<comment type="subunit">
    <text evidence="4">Heterodimer of ArnE and ArnF.</text>
</comment>
<comment type="subcellular location">
    <subcellularLocation>
        <location>Cell inner membrane</location>
        <topology>Multi-pass membrane protein</topology>
    </subcellularLocation>
</comment>
<comment type="disruption phenotype">
    <text evidence="2">Cells lacking this gene lack L-Ara4N-modified lipid A and are sensitive to polymyxin.</text>
</comment>
<comment type="similarity">
    <text evidence="3">Belongs to the ArnE family.</text>
</comment>
<proteinExistence type="evidence at protein level"/>
<reference key="1">
    <citation type="journal article" date="1997" name="Science">
        <title>The complete genome sequence of Escherichia coli K-12.</title>
        <authorList>
            <person name="Blattner F.R."/>
            <person name="Plunkett G. III"/>
            <person name="Bloch C.A."/>
            <person name="Perna N.T."/>
            <person name="Burland V."/>
            <person name="Riley M."/>
            <person name="Collado-Vides J."/>
            <person name="Glasner J.D."/>
            <person name="Rode C.K."/>
            <person name="Mayhew G.F."/>
            <person name="Gregor J."/>
            <person name="Davis N.W."/>
            <person name="Kirkpatrick H.A."/>
            <person name="Goeden M.A."/>
            <person name="Rose D.J."/>
            <person name="Mau B."/>
            <person name="Shao Y."/>
        </authorList>
    </citation>
    <scope>NUCLEOTIDE SEQUENCE [LARGE SCALE GENOMIC DNA]</scope>
    <source>
        <strain>K12 / MG1655 / ATCC 47076</strain>
    </source>
</reference>
<reference key="2">
    <citation type="journal article" date="2006" name="Mol. Syst. Biol.">
        <title>Highly accurate genome sequences of Escherichia coli K-12 strains MG1655 and W3110.</title>
        <authorList>
            <person name="Hayashi K."/>
            <person name="Morooka N."/>
            <person name="Yamamoto Y."/>
            <person name="Fujita K."/>
            <person name="Isono K."/>
            <person name="Choi S."/>
            <person name="Ohtsubo E."/>
            <person name="Baba T."/>
            <person name="Wanner B.L."/>
            <person name="Mori H."/>
            <person name="Horiuchi T."/>
        </authorList>
    </citation>
    <scope>NUCLEOTIDE SEQUENCE [LARGE SCALE GENOMIC DNA]</scope>
    <source>
        <strain>K12 / W3110 / ATCC 27325 / DSM 5911</strain>
    </source>
</reference>
<reference key="3">
    <citation type="journal article" date="1996" name="Gene">
        <title>Menaquinone (vitamin K2) biosynthesis: localization and characterization of the menE gene from Escherichia coli.</title>
        <authorList>
            <person name="Sharma V."/>
            <person name="Hudspeth M.E.S."/>
            <person name="Meganathan R."/>
        </authorList>
    </citation>
    <scope>NUCLEOTIDE SEQUENCE [GENOMIC DNA] OF 81-111</scope>
    <source>
        <strain>K12</strain>
    </source>
</reference>
<reference key="4">
    <citation type="journal article" date="2005" name="Science">
        <title>Global topology analysis of the Escherichia coli inner membrane proteome.</title>
        <authorList>
            <person name="Daley D.O."/>
            <person name="Rapp M."/>
            <person name="Granseth E."/>
            <person name="Melen K."/>
            <person name="Drew D."/>
            <person name="von Heijne G."/>
        </authorList>
    </citation>
    <scope>TOPOLOGY [LARGE SCALE ANALYSIS]</scope>
    <source>
        <strain>K12 / MG1655 / ATCC 47076</strain>
    </source>
</reference>
<reference key="5">
    <citation type="journal article" date="2007" name="J. Biol. Chem.">
        <title>An undecaprenyl phosphate-aminoarabinose flippase required for polymyxin resistance in Escherichia coli.</title>
        <authorList>
            <person name="Yan A."/>
            <person name="Guan Z."/>
            <person name="Raetz C.R.H."/>
        </authorList>
    </citation>
    <scope>FUNCTION</scope>
    <scope>SUBUNIT</scope>
    <scope>DISRUPTION PHENOTYPE</scope>
    <source>
        <strain>K12 / W3110 / ATCC 27325 / DSM 5911</strain>
    </source>
</reference>
<sequence length="111" mass="12192">MIWLTLVFASLLSVAGQLCQKQATCFVAINKRRKHIVLWLGLALACLGLAMVLWLLVLQNVPVGIAYPMLSLNFVWVTLAAVKLWHEPVSPRHWCGVAFIIGGIVILGSTV</sequence>
<accession>Q47377</accession>
<accession>Q2EES8</accession>
<accession>Q2MAN1</accession>
<dbReference type="EMBL" id="U00096">
    <property type="protein sequence ID" value="ABD18693.1"/>
    <property type="molecule type" value="Genomic_DNA"/>
</dbReference>
<dbReference type="EMBL" id="AP009048">
    <property type="protein sequence ID" value="BAE76675.1"/>
    <property type="molecule type" value="Genomic_DNA"/>
</dbReference>
<dbReference type="EMBL" id="L35031">
    <property type="protein sequence ID" value="AAB04895.1"/>
    <property type="molecule type" value="Genomic_DNA"/>
</dbReference>
<dbReference type="RefSeq" id="WP_000638031.1">
    <property type="nucleotide sequence ID" value="NZ_STEB01000008.1"/>
</dbReference>
<dbReference type="RefSeq" id="YP_588462.1">
    <property type="nucleotide sequence ID" value="NC_000913.3"/>
</dbReference>
<dbReference type="SMR" id="Q47377"/>
<dbReference type="BioGRID" id="4260500">
    <property type="interactions" value="209"/>
</dbReference>
<dbReference type="FunCoup" id="Q47377">
    <property type="interactions" value="196"/>
</dbReference>
<dbReference type="STRING" id="511145.b4544"/>
<dbReference type="TCDB" id="2.A.7.22.1">
    <property type="family name" value="the drug/metabolite transporter (dmt) superfamily"/>
</dbReference>
<dbReference type="PaxDb" id="511145-b4544"/>
<dbReference type="EnsemblBacteria" id="ABD18693">
    <property type="protein sequence ID" value="ABD18693"/>
    <property type="gene ID" value="b4544"/>
</dbReference>
<dbReference type="GeneID" id="1450282"/>
<dbReference type="GeneID" id="93774916"/>
<dbReference type="KEGG" id="ecj:JW2252"/>
<dbReference type="KEGG" id="eco:b4544"/>
<dbReference type="KEGG" id="ecoc:C3026_12610"/>
<dbReference type="PATRIC" id="fig|1411691.4.peg.4479"/>
<dbReference type="EchoBASE" id="EB4090"/>
<dbReference type="eggNOG" id="COG2076">
    <property type="taxonomic scope" value="Bacteria"/>
</dbReference>
<dbReference type="HOGENOM" id="CLU_131462_5_1_6"/>
<dbReference type="InParanoid" id="Q47377"/>
<dbReference type="OMA" id="TCAGQLC"/>
<dbReference type="OrthoDB" id="6058674at2"/>
<dbReference type="PhylomeDB" id="Q47377"/>
<dbReference type="BioCyc" id="EcoCyc:MONOMER0-2682"/>
<dbReference type="BioCyc" id="MetaCyc:MONOMER0-2682"/>
<dbReference type="UniPathway" id="UPA00030"/>
<dbReference type="PRO" id="PR:Q47377"/>
<dbReference type="Proteomes" id="UP000000625">
    <property type="component" value="Chromosome"/>
</dbReference>
<dbReference type="GO" id="GO:0005886">
    <property type="term" value="C:plasma membrane"/>
    <property type="evidence" value="ECO:0000314"/>
    <property type="project" value="EcoCyc"/>
</dbReference>
<dbReference type="GO" id="GO:1901505">
    <property type="term" value="F:carbohydrate derivative transmembrane transporter activity"/>
    <property type="evidence" value="ECO:0000315"/>
    <property type="project" value="EcoCyc"/>
</dbReference>
<dbReference type="GO" id="GO:0022857">
    <property type="term" value="F:transmembrane transporter activity"/>
    <property type="evidence" value="ECO:0000318"/>
    <property type="project" value="GO_Central"/>
</dbReference>
<dbReference type="GO" id="GO:1901264">
    <property type="term" value="P:carbohydrate derivative transport"/>
    <property type="evidence" value="ECO:0000315"/>
    <property type="project" value="EcoCyc"/>
</dbReference>
<dbReference type="GO" id="GO:0009245">
    <property type="term" value="P:lipid A biosynthetic process"/>
    <property type="evidence" value="ECO:0007669"/>
    <property type="project" value="UniProtKB-UniRule"/>
</dbReference>
<dbReference type="GO" id="GO:0009103">
    <property type="term" value="P:lipopolysaccharide biosynthetic process"/>
    <property type="evidence" value="ECO:0007669"/>
    <property type="project" value="UniProtKB-UniRule"/>
</dbReference>
<dbReference type="GO" id="GO:0010041">
    <property type="term" value="P:response to iron(III) ion"/>
    <property type="evidence" value="ECO:0000316"/>
    <property type="project" value="EcoCyc"/>
</dbReference>
<dbReference type="GO" id="GO:0055085">
    <property type="term" value="P:transmembrane transport"/>
    <property type="evidence" value="ECO:0000318"/>
    <property type="project" value="GO_Central"/>
</dbReference>
<dbReference type="FunFam" id="1.10.3730.20:FF:000002">
    <property type="entry name" value="Probable 4-amino-4-deoxy-L-arabinose-phosphoundecaprenol flippase subunit ArnE"/>
    <property type="match status" value="1"/>
</dbReference>
<dbReference type="Gene3D" id="1.10.3730.20">
    <property type="match status" value="1"/>
</dbReference>
<dbReference type="HAMAP" id="MF_01869">
    <property type="entry name" value="Flippase_ArnE"/>
    <property type="match status" value="1"/>
</dbReference>
<dbReference type="InterPro" id="IPR000620">
    <property type="entry name" value="EamA_dom"/>
</dbReference>
<dbReference type="InterPro" id="IPR022883">
    <property type="entry name" value="Flippase_ArnE"/>
</dbReference>
<dbReference type="InterPro" id="IPR000390">
    <property type="entry name" value="Small_drug/metabolite_transptr"/>
</dbReference>
<dbReference type="NCBIfam" id="NF011625">
    <property type="entry name" value="PRK15051.1"/>
    <property type="match status" value="1"/>
</dbReference>
<dbReference type="PANTHER" id="PTHR30561:SF23">
    <property type="entry name" value="4-AMINO-4-DEOXY-L-ARABINOSE-PHOSPHOUNDECAPRENOL FLIPPASE SUBUNIT ARNE-RELATED"/>
    <property type="match status" value="1"/>
</dbReference>
<dbReference type="PANTHER" id="PTHR30561">
    <property type="entry name" value="SMR FAMILY PROTON-DEPENDENT DRUG EFFLUX TRANSPORTER SUGE"/>
    <property type="match status" value="1"/>
</dbReference>
<dbReference type="Pfam" id="PF00892">
    <property type="entry name" value="EamA"/>
    <property type="match status" value="1"/>
</dbReference>
<dbReference type="SUPFAM" id="SSF103481">
    <property type="entry name" value="Multidrug resistance efflux transporter EmrE"/>
    <property type="match status" value="1"/>
</dbReference>
<keyword id="KW-0997">Cell inner membrane</keyword>
<keyword id="KW-1003">Cell membrane</keyword>
<keyword id="KW-0441">Lipid A biosynthesis</keyword>
<keyword id="KW-0444">Lipid biosynthesis</keyword>
<keyword id="KW-0443">Lipid metabolism</keyword>
<keyword id="KW-0448">Lipopolysaccharide biosynthesis</keyword>
<keyword id="KW-0472">Membrane</keyword>
<keyword id="KW-1185">Reference proteome</keyword>
<keyword id="KW-0812">Transmembrane</keyword>
<keyword id="KW-1133">Transmembrane helix</keyword>
<keyword id="KW-0813">Transport</keyword>
<feature type="chain" id="PRO_0000169184" description="Probable 4-amino-4-deoxy-L-arabinose-phosphoundecaprenol flippase subunit ArnE">
    <location>
        <begin position="1"/>
        <end position="111"/>
    </location>
</feature>
<feature type="topological domain" description="Cytoplasmic" evidence="1">
    <location>
        <begin position="1"/>
        <end position="35"/>
    </location>
</feature>
<feature type="transmembrane region" description="Helical" evidence="1">
    <location>
        <begin position="36"/>
        <end position="56"/>
    </location>
</feature>
<feature type="topological domain" description="Periplasmic" evidence="1">
    <location>
        <begin position="57"/>
        <end position="61"/>
    </location>
</feature>
<feature type="transmembrane region" description="Helical" evidence="1">
    <location>
        <begin position="62"/>
        <end position="82"/>
    </location>
</feature>
<feature type="topological domain" description="Cytoplasmic" evidence="1">
    <location>
        <begin position="83"/>
        <end position="87"/>
    </location>
</feature>
<feature type="transmembrane region" description="Helical" evidence="1">
    <location>
        <begin position="88"/>
        <end position="108"/>
    </location>
</feature>
<feature type="topological domain" description="Periplasmic" evidence="1">
    <location>
        <begin position="109"/>
        <end position="111"/>
    </location>
</feature>
<feature type="domain" description="EamA">
    <location>
        <begin position="40"/>
        <end position="109"/>
    </location>
</feature>
<protein>
    <recommendedName>
        <fullName>Probable 4-amino-4-deoxy-L-arabinose-phosphoundecaprenol flippase subunit ArnE</fullName>
        <shortName>L-Ara4N-phosphoundecaprenol flippase subunit ArnE</shortName>
    </recommendedName>
    <alternativeName>
        <fullName>Undecaprenyl phosphate-aminoarabinose flippase subunit ArnE</fullName>
    </alternativeName>
</protein>
<name>ARNE_ECOLI</name>